<evidence type="ECO:0000255" key="1">
    <source>
        <dbReference type="HAMAP-Rule" id="MF_01343"/>
    </source>
</evidence>
<evidence type="ECO:0000305" key="2"/>
<comment type="function">
    <text evidence="1">One of the primary rRNA binding proteins, it binds directly to 16S rRNA where it helps nucleate assembly of the platform of the 30S subunit by binding and bridging several RNA helices of the 16S rRNA.</text>
</comment>
<comment type="function">
    <text evidence="1">Forms an intersubunit bridge (bridge B4) with the 23S rRNA of the 50S subunit in the ribosome.</text>
</comment>
<comment type="subunit">
    <text evidence="1">Part of the 30S ribosomal subunit. Forms a bridge to the 50S subunit in the 70S ribosome, contacting the 23S rRNA.</text>
</comment>
<comment type="similarity">
    <text evidence="1">Belongs to the universal ribosomal protein uS15 family.</text>
</comment>
<reference key="1">
    <citation type="journal article" date="2007" name="PLoS Genet.">
        <title>Patterns and implications of gene gain and loss in the evolution of Prochlorococcus.</title>
        <authorList>
            <person name="Kettler G.C."/>
            <person name="Martiny A.C."/>
            <person name="Huang K."/>
            <person name="Zucker J."/>
            <person name="Coleman M.L."/>
            <person name="Rodrigue S."/>
            <person name="Chen F."/>
            <person name="Lapidus A."/>
            <person name="Ferriera S."/>
            <person name="Johnson J."/>
            <person name="Steglich C."/>
            <person name="Church G.M."/>
            <person name="Richardson P."/>
            <person name="Chisholm S.W."/>
        </authorList>
    </citation>
    <scope>NUCLEOTIDE SEQUENCE [LARGE SCALE GENOMIC DNA]</scope>
    <source>
        <strain>MIT 9515</strain>
    </source>
</reference>
<proteinExistence type="inferred from homology"/>
<organism>
    <name type="scientific">Prochlorococcus marinus (strain MIT 9515)</name>
    <dbReference type="NCBI Taxonomy" id="167542"/>
    <lineage>
        <taxon>Bacteria</taxon>
        <taxon>Bacillati</taxon>
        <taxon>Cyanobacteriota</taxon>
        <taxon>Cyanophyceae</taxon>
        <taxon>Synechococcales</taxon>
        <taxon>Prochlorococcaceae</taxon>
        <taxon>Prochlorococcus</taxon>
    </lineage>
</organism>
<accession>A2BWS2</accession>
<sequence>MTLDTAEKQKLIESHQVHPTDTGSVEIQVAMISERITKLSEHLQGNIHDYASRQGLLKMIGKRKRLLSYIKGKDPKNYQDLIKKIGIRG</sequence>
<protein>
    <recommendedName>
        <fullName evidence="1">Small ribosomal subunit protein uS15</fullName>
    </recommendedName>
    <alternativeName>
        <fullName evidence="2">30S ribosomal protein S15</fullName>
    </alternativeName>
</protein>
<keyword id="KW-0687">Ribonucleoprotein</keyword>
<keyword id="KW-0689">Ribosomal protein</keyword>
<keyword id="KW-0694">RNA-binding</keyword>
<keyword id="KW-0699">rRNA-binding</keyword>
<dbReference type="EMBL" id="CP000552">
    <property type="protein sequence ID" value="ABM72233.1"/>
    <property type="molecule type" value="Genomic_DNA"/>
</dbReference>
<dbReference type="RefSeq" id="WP_011820334.1">
    <property type="nucleotide sequence ID" value="NC_008817.1"/>
</dbReference>
<dbReference type="SMR" id="A2BWS2"/>
<dbReference type="STRING" id="167542.P9515_10261"/>
<dbReference type="GeneID" id="60200737"/>
<dbReference type="KEGG" id="pmc:P9515_10261"/>
<dbReference type="eggNOG" id="COG0184">
    <property type="taxonomic scope" value="Bacteria"/>
</dbReference>
<dbReference type="HOGENOM" id="CLU_148518_0_0_3"/>
<dbReference type="OrthoDB" id="9799262at2"/>
<dbReference type="Proteomes" id="UP000001589">
    <property type="component" value="Chromosome"/>
</dbReference>
<dbReference type="GO" id="GO:0022627">
    <property type="term" value="C:cytosolic small ribosomal subunit"/>
    <property type="evidence" value="ECO:0007669"/>
    <property type="project" value="TreeGrafter"/>
</dbReference>
<dbReference type="GO" id="GO:0019843">
    <property type="term" value="F:rRNA binding"/>
    <property type="evidence" value="ECO:0007669"/>
    <property type="project" value="UniProtKB-UniRule"/>
</dbReference>
<dbReference type="GO" id="GO:0003735">
    <property type="term" value="F:structural constituent of ribosome"/>
    <property type="evidence" value="ECO:0007669"/>
    <property type="project" value="InterPro"/>
</dbReference>
<dbReference type="GO" id="GO:0006412">
    <property type="term" value="P:translation"/>
    <property type="evidence" value="ECO:0007669"/>
    <property type="project" value="UniProtKB-UniRule"/>
</dbReference>
<dbReference type="CDD" id="cd00353">
    <property type="entry name" value="Ribosomal_S15p_S13e"/>
    <property type="match status" value="1"/>
</dbReference>
<dbReference type="FunFam" id="1.10.287.10:FF:000002">
    <property type="entry name" value="30S ribosomal protein S15"/>
    <property type="match status" value="1"/>
</dbReference>
<dbReference type="Gene3D" id="6.10.250.3130">
    <property type="match status" value="1"/>
</dbReference>
<dbReference type="Gene3D" id="1.10.287.10">
    <property type="entry name" value="S15/NS1, RNA-binding"/>
    <property type="match status" value="1"/>
</dbReference>
<dbReference type="HAMAP" id="MF_01343_B">
    <property type="entry name" value="Ribosomal_uS15_B"/>
    <property type="match status" value="1"/>
</dbReference>
<dbReference type="InterPro" id="IPR000589">
    <property type="entry name" value="Ribosomal_uS15"/>
</dbReference>
<dbReference type="InterPro" id="IPR005290">
    <property type="entry name" value="Ribosomal_uS15_bac-type"/>
</dbReference>
<dbReference type="InterPro" id="IPR009068">
    <property type="entry name" value="uS15_NS1_RNA-bd_sf"/>
</dbReference>
<dbReference type="NCBIfam" id="TIGR00952">
    <property type="entry name" value="S15_bact"/>
    <property type="match status" value="1"/>
</dbReference>
<dbReference type="PANTHER" id="PTHR23321">
    <property type="entry name" value="RIBOSOMAL PROTEIN S15, BACTERIAL AND ORGANELLAR"/>
    <property type="match status" value="1"/>
</dbReference>
<dbReference type="PANTHER" id="PTHR23321:SF26">
    <property type="entry name" value="SMALL RIBOSOMAL SUBUNIT PROTEIN US15M"/>
    <property type="match status" value="1"/>
</dbReference>
<dbReference type="Pfam" id="PF00312">
    <property type="entry name" value="Ribosomal_S15"/>
    <property type="match status" value="1"/>
</dbReference>
<dbReference type="SMART" id="SM01387">
    <property type="entry name" value="Ribosomal_S15"/>
    <property type="match status" value="1"/>
</dbReference>
<dbReference type="SUPFAM" id="SSF47060">
    <property type="entry name" value="S15/NS1 RNA-binding domain"/>
    <property type="match status" value="1"/>
</dbReference>
<dbReference type="PROSITE" id="PS00362">
    <property type="entry name" value="RIBOSOMAL_S15"/>
    <property type="match status" value="1"/>
</dbReference>
<gene>
    <name evidence="1" type="primary">rpsO</name>
    <name evidence="1" type="synonym">rps15</name>
    <name type="ordered locus">P9515_10261</name>
</gene>
<feature type="chain" id="PRO_1000054841" description="Small ribosomal subunit protein uS15">
    <location>
        <begin position="1"/>
        <end position="89"/>
    </location>
</feature>
<name>RS15_PROM5</name>